<name>RL18_RHOBA</name>
<dbReference type="EMBL" id="BX294146">
    <property type="protein sequence ID" value="CAD75615.1"/>
    <property type="status" value="ALT_INIT"/>
    <property type="molecule type" value="Genomic_DNA"/>
</dbReference>
<dbReference type="RefSeq" id="NP_868068.1">
    <property type="nucleotide sequence ID" value="NC_005027.1"/>
</dbReference>
<dbReference type="RefSeq" id="WP_007326812.1">
    <property type="nucleotide sequence ID" value="NC_005027.1"/>
</dbReference>
<dbReference type="SMR" id="Q7UN04"/>
<dbReference type="FunCoup" id="Q7UN04">
    <property type="interactions" value="573"/>
</dbReference>
<dbReference type="STRING" id="243090.RB7857"/>
<dbReference type="EnsemblBacteria" id="CAD75615">
    <property type="protein sequence ID" value="CAD75615"/>
    <property type="gene ID" value="RB7857"/>
</dbReference>
<dbReference type="KEGG" id="rba:RB7857"/>
<dbReference type="PATRIC" id="fig|243090.15.peg.3799"/>
<dbReference type="eggNOG" id="COG0256">
    <property type="taxonomic scope" value="Bacteria"/>
</dbReference>
<dbReference type="HOGENOM" id="CLU_098841_0_1_0"/>
<dbReference type="InParanoid" id="Q7UN04"/>
<dbReference type="OrthoDB" id="9810939at2"/>
<dbReference type="Proteomes" id="UP000001025">
    <property type="component" value="Chromosome"/>
</dbReference>
<dbReference type="GO" id="GO:0022625">
    <property type="term" value="C:cytosolic large ribosomal subunit"/>
    <property type="evidence" value="ECO:0000318"/>
    <property type="project" value="GO_Central"/>
</dbReference>
<dbReference type="GO" id="GO:0008097">
    <property type="term" value="F:5S rRNA binding"/>
    <property type="evidence" value="ECO:0000318"/>
    <property type="project" value="GO_Central"/>
</dbReference>
<dbReference type="GO" id="GO:0003735">
    <property type="term" value="F:structural constituent of ribosome"/>
    <property type="evidence" value="ECO:0007669"/>
    <property type="project" value="InterPro"/>
</dbReference>
<dbReference type="GO" id="GO:0006412">
    <property type="term" value="P:translation"/>
    <property type="evidence" value="ECO:0007669"/>
    <property type="project" value="UniProtKB-UniRule"/>
</dbReference>
<dbReference type="CDD" id="cd00432">
    <property type="entry name" value="Ribosomal_L18_L5e"/>
    <property type="match status" value="1"/>
</dbReference>
<dbReference type="FunFam" id="3.30.420.100:FF:000001">
    <property type="entry name" value="50S ribosomal protein L18"/>
    <property type="match status" value="1"/>
</dbReference>
<dbReference type="Gene3D" id="3.30.420.100">
    <property type="match status" value="1"/>
</dbReference>
<dbReference type="HAMAP" id="MF_01337_B">
    <property type="entry name" value="Ribosomal_uL18_B"/>
    <property type="match status" value="1"/>
</dbReference>
<dbReference type="InterPro" id="IPR004389">
    <property type="entry name" value="Ribosomal_uL18_bac-type"/>
</dbReference>
<dbReference type="InterPro" id="IPR005484">
    <property type="entry name" value="Ribosomal_uL18_bac/euk"/>
</dbReference>
<dbReference type="NCBIfam" id="TIGR00060">
    <property type="entry name" value="L18_bact"/>
    <property type="match status" value="1"/>
</dbReference>
<dbReference type="PANTHER" id="PTHR12899">
    <property type="entry name" value="39S RIBOSOMAL PROTEIN L18, MITOCHONDRIAL"/>
    <property type="match status" value="1"/>
</dbReference>
<dbReference type="PANTHER" id="PTHR12899:SF3">
    <property type="entry name" value="LARGE RIBOSOMAL SUBUNIT PROTEIN UL18M"/>
    <property type="match status" value="1"/>
</dbReference>
<dbReference type="Pfam" id="PF00861">
    <property type="entry name" value="Ribosomal_L18p"/>
    <property type="match status" value="1"/>
</dbReference>
<dbReference type="SUPFAM" id="SSF53137">
    <property type="entry name" value="Translational machinery components"/>
    <property type="match status" value="1"/>
</dbReference>
<sequence length="122" mass="13520">MDKNKKLQSKRLRRRRHVRNKLRGSADQPRLCIQRTLKHFACQVVDDQAGKTLLSASTRDKTVRDQVKAGGNCDAAALVGKLVAEKAAEAGVKTVKLDRGHNKYHGRVKAFADAAREAGLQF</sequence>
<evidence type="ECO:0000255" key="1">
    <source>
        <dbReference type="HAMAP-Rule" id="MF_01337"/>
    </source>
</evidence>
<evidence type="ECO:0000256" key="2">
    <source>
        <dbReference type="SAM" id="MobiDB-lite"/>
    </source>
</evidence>
<evidence type="ECO:0000305" key="3"/>
<feature type="chain" id="PRO_0000131328" description="Large ribosomal subunit protein uL18">
    <location>
        <begin position="1"/>
        <end position="122"/>
    </location>
</feature>
<feature type="region of interest" description="Disordered" evidence="2">
    <location>
        <begin position="1"/>
        <end position="25"/>
    </location>
</feature>
<feature type="compositionally biased region" description="Basic residues" evidence="2">
    <location>
        <begin position="1"/>
        <end position="22"/>
    </location>
</feature>
<organism>
    <name type="scientific">Rhodopirellula baltica (strain DSM 10527 / NCIMB 13988 / SH1)</name>
    <dbReference type="NCBI Taxonomy" id="243090"/>
    <lineage>
        <taxon>Bacteria</taxon>
        <taxon>Pseudomonadati</taxon>
        <taxon>Planctomycetota</taxon>
        <taxon>Planctomycetia</taxon>
        <taxon>Pirellulales</taxon>
        <taxon>Pirellulaceae</taxon>
        <taxon>Rhodopirellula</taxon>
    </lineage>
</organism>
<keyword id="KW-1185">Reference proteome</keyword>
<keyword id="KW-0687">Ribonucleoprotein</keyword>
<keyword id="KW-0689">Ribosomal protein</keyword>
<keyword id="KW-0694">RNA-binding</keyword>
<keyword id="KW-0699">rRNA-binding</keyword>
<gene>
    <name evidence="1" type="primary">rplR</name>
    <name type="ordered locus">RB7857</name>
</gene>
<protein>
    <recommendedName>
        <fullName evidence="1">Large ribosomal subunit protein uL18</fullName>
    </recommendedName>
    <alternativeName>
        <fullName evidence="3">50S ribosomal protein L18</fullName>
    </alternativeName>
</protein>
<accession>Q7UN04</accession>
<reference key="1">
    <citation type="journal article" date="2003" name="Proc. Natl. Acad. Sci. U.S.A.">
        <title>Complete genome sequence of the marine planctomycete Pirellula sp. strain 1.</title>
        <authorList>
            <person name="Gloeckner F.O."/>
            <person name="Kube M."/>
            <person name="Bauer M."/>
            <person name="Teeling H."/>
            <person name="Lombardot T."/>
            <person name="Ludwig W."/>
            <person name="Gade D."/>
            <person name="Beck A."/>
            <person name="Borzym K."/>
            <person name="Heitmann K."/>
            <person name="Rabus R."/>
            <person name="Schlesner H."/>
            <person name="Amann R."/>
            <person name="Reinhardt R."/>
        </authorList>
    </citation>
    <scope>NUCLEOTIDE SEQUENCE [LARGE SCALE GENOMIC DNA]</scope>
    <source>
        <strain>DSM 10527 / NCIMB 13988 / SH1</strain>
    </source>
</reference>
<proteinExistence type="inferred from homology"/>
<comment type="function">
    <text evidence="1">This is one of the proteins that bind and probably mediate the attachment of the 5S RNA into the large ribosomal subunit, where it forms part of the central protuberance.</text>
</comment>
<comment type="subunit">
    <text evidence="1">Part of the 50S ribosomal subunit; part of the 5S rRNA/L5/L18/L25 subcomplex. Contacts the 5S and 23S rRNAs.</text>
</comment>
<comment type="similarity">
    <text evidence="1">Belongs to the universal ribosomal protein uL18 family.</text>
</comment>
<comment type="sequence caution" evidence="3">
    <conflict type="erroneous initiation">
        <sequence resource="EMBL-CDS" id="CAD75615"/>
    </conflict>
</comment>